<protein>
    <recommendedName>
        <fullName evidence="1">Peptide chain release factor 3</fullName>
        <shortName evidence="1">RF-3</shortName>
    </recommendedName>
</protein>
<keyword id="KW-0963">Cytoplasm</keyword>
<keyword id="KW-0342">GTP-binding</keyword>
<keyword id="KW-0547">Nucleotide-binding</keyword>
<keyword id="KW-0648">Protein biosynthesis</keyword>
<keyword id="KW-1185">Reference proteome</keyword>
<reference key="1">
    <citation type="submission" date="2007-03" db="EMBL/GenBank/DDBJ databases">
        <title>Complete sequence of Shewanella loihica PV-4.</title>
        <authorList>
            <consortium name="US DOE Joint Genome Institute"/>
            <person name="Copeland A."/>
            <person name="Lucas S."/>
            <person name="Lapidus A."/>
            <person name="Barry K."/>
            <person name="Detter J.C."/>
            <person name="Glavina del Rio T."/>
            <person name="Hammon N."/>
            <person name="Israni S."/>
            <person name="Dalin E."/>
            <person name="Tice H."/>
            <person name="Pitluck S."/>
            <person name="Chain P."/>
            <person name="Malfatti S."/>
            <person name="Shin M."/>
            <person name="Vergez L."/>
            <person name="Schmutz J."/>
            <person name="Larimer F."/>
            <person name="Land M."/>
            <person name="Hauser L."/>
            <person name="Kyrpides N."/>
            <person name="Mikhailova N."/>
            <person name="Romine M.F."/>
            <person name="Serres G."/>
            <person name="Fredrickson J."/>
            <person name="Tiedje J."/>
            <person name="Richardson P."/>
        </authorList>
    </citation>
    <scope>NUCLEOTIDE SEQUENCE [LARGE SCALE GENOMIC DNA]</scope>
    <source>
        <strain>ATCC BAA-1088 / PV-4</strain>
    </source>
</reference>
<accession>A3QGT8</accession>
<evidence type="ECO:0000255" key="1">
    <source>
        <dbReference type="HAMAP-Rule" id="MF_00072"/>
    </source>
</evidence>
<dbReference type="EMBL" id="CP000606">
    <property type="protein sequence ID" value="ABO24686.1"/>
    <property type="molecule type" value="Genomic_DNA"/>
</dbReference>
<dbReference type="RefSeq" id="WP_011866617.1">
    <property type="nucleotide sequence ID" value="NC_009092.1"/>
</dbReference>
<dbReference type="SMR" id="A3QGT8"/>
<dbReference type="STRING" id="323850.Shew_2820"/>
<dbReference type="KEGG" id="slo:Shew_2820"/>
<dbReference type="eggNOG" id="COG4108">
    <property type="taxonomic scope" value="Bacteria"/>
</dbReference>
<dbReference type="HOGENOM" id="CLU_002794_2_1_6"/>
<dbReference type="OrthoDB" id="9804431at2"/>
<dbReference type="Proteomes" id="UP000001558">
    <property type="component" value="Chromosome"/>
</dbReference>
<dbReference type="GO" id="GO:0005829">
    <property type="term" value="C:cytosol"/>
    <property type="evidence" value="ECO:0007669"/>
    <property type="project" value="TreeGrafter"/>
</dbReference>
<dbReference type="GO" id="GO:0005525">
    <property type="term" value="F:GTP binding"/>
    <property type="evidence" value="ECO:0007669"/>
    <property type="project" value="UniProtKB-UniRule"/>
</dbReference>
<dbReference type="GO" id="GO:0003924">
    <property type="term" value="F:GTPase activity"/>
    <property type="evidence" value="ECO:0007669"/>
    <property type="project" value="InterPro"/>
</dbReference>
<dbReference type="GO" id="GO:0097216">
    <property type="term" value="F:guanosine tetraphosphate binding"/>
    <property type="evidence" value="ECO:0007669"/>
    <property type="project" value="UniProtKB-ARBA"/>
</dbReference>
<dbReference type="GO" id="GO:0016150">
    <property type="term" value="F:translation release factor activity, codon nonspecific"/>
    <property type="evidence" value="ECO:0007669"/>
    <property type="project" value="TreeGrafter"/>
</dbReference>
<dbReference type="GO" id="GO:0016149">
    <property type="term" value="F:translation release factor activity, codon specific"/>
    <property type="evidence" value="ECO:0007669"/>
    <property type="project" value="UniProtKB-UniRule"/>
</dbReference>
<dbReference type="GO" id="GO:0006449">
    <property type="term" value="P:regulation of translational termination"/>
    <property type="evidence" value="ECO:0007669"/>
    <property type="project" value="UniProtKB-UniRule"/>
</dbReference>
<dbReference type="CDD" id="cd04169">
    <property type="entry name" value="RF3"/>
    <property type="match status" value="1"/>
</dbReference>
<dbReference type="CDD" id="cd03689">
    <property type="entry name" value="RF3_II"/>
    <property type="match status" value="1"/>
</dbReference>
<dbReference type="CDD" id="cd16259">
    <property type="entry name" value="RF3_III"/>
    <property type="match status" value="1"/>
</dbReference>
<dbReference type="FunFam" id="2.40.30.10:FF:000040">
    <property type="entry name" value="Peptide chain release factor 3"/>
    <property type="match status" value="1"/>
</dbReference>
<dbReference type="FunFam" id="3.30.70.3280:FF:000001">
    <property type="entry name" value="Peptide chain release factor 3"/>
    <property type="match status" value="1"/>
</dbReference>
<dbReference type="FunFam" id="3.40.50.300:FF:000542">
    <property type="entry name" value="Peptide chain release factor 3"/>
    <property type="match status" value="1"/>
</dbReference>
<dbReference type="Gene3D" id="3.40.50.300">
    <property type="entry name" value="P-loop containing nucleotide triphosphate hydrolases"/>
    <property type="match status" value="2"/>
</dbReference>
<dbReference type="Gene3D" id="3.30.70.3280">
    <property type="entry name" value="Peptide chain release factor 3, domain III"/>
    <property type="match status" value="1"/>
</dbReference>
<dbReference type="HAMAP" id="MF_00072">
    <property type="entry name" value="Rel_fac_3"/>
    <property type="match status" value="1"/>
</dbReference>
<dbReference type="InterPro" id="IPR053905">
    <property type="entry name" value="EF-G-like_DII"/>
</dbReference>
<dbReference type="InterPro" id="IPR035647">
    <property type="entry name" value="EFG_III/V"/>
</dbReference>
<dbReference type="InterPro" id="IPR031157">
    <property type="entry name" value="G_TR_CS"/>
</dbReference>
<dbReference type="InterPro" id="IPR027417">
    <property type="entry name" value="P-loop_NTPase"/>
</dbReference>
<dbReference type="InterPro" id="IPR004548">
    <property type="entry name" value="PrfC"/>
</dbReference>
<dbReference type="InterPro" id="IPR032090">
    <property type="entry name" value="RF3_C"/>
</dbReference>
<dbReference type="InterPro" id="IPR038467">
    <property type="entry name" value="RF3_dom_3_sf"/>
</dbReference>
<dbReference type="InterPro" id="IPR041732">
    <property type="entry name" value="RF3_GTP-bd"/>
</dbReference>
<dbReference type="InterPro" id="IPR005225">
    <property type="entry name" value="Small_GTP-bd"/>
</dbReference>
<dbReference type="InterPro" id="IPR000795">
    <property type="entry name" value="T_Tr_GTP-bd_dom"/>
</dbReference>
<dbReference type="InterPro" id="IPR009000">
    <property type="entry name" value="Transl_B-barrel_sf"/>
</dbReference>
<dbReference type="NCBIfam" id="TIGR00503">
    <property type="entry name" value="prfC"/>
    <property type="match status" value="1"/>
</dbReference>
<dbReference type="NCBIfam" id="NF001964">
    <property type="entry name" value="PRK00741.1"/>
    <property type="match status" value="1"/>
</dbReference>
<dbReference type="NCBIfam" id="TIGR00231">
    <property type="entry name" value="small_GTP"/>
    <property type="match status" value="1"/>
</dbReference>
<dbReference type="PANTHER" id="PTHR43556">
    <property type="entry name" value="PEPTIDE CHAIN RELEASE FACTOR RF3"/>
    <property type="match status" value="1"/>
</dbReference>
<dbReference type="PANTHER" id="PTHR43556:SF2">
    <property type="entry name" value="PEPTIDE CHAIN RELEASE FACTOR RF3"/>
    <property type="match status" value="1"/>
</dbReference>
<dbReference type="Pfam" id="PF22042">
    <property type="entry name" value="EF-G_D2"/>
    <property type="match status" value="1"/>
</dbReference>
<dbReference type="Pfam" id="PF00009">
    <property type="entry name" value="GTP_EFTU"/>
    <property type="match status" value="1"/>
</dbReference>
<dbReference type="Pfam" id="PF16658">
    <property type="entry name" value="RF3_C"/>
    <property type="match status" value="1"/>
</dbReference>
<dbReference type="PRINTS" id="PR00315">
    <property type="entry name" value="ELONGATNFCT"/>
</dbReference>
<dbReference type="SUPFAM" id="SSF54980">
    <property type="entry name" value="EF-G C-terminal domain-like"/>
    <property type="match status" value="1"/>
</dbReference>
<dbReference type="SUPFAM" id="SSF52540">
    <property type="entry name" value="P-loop containing nucleoside triphosphate hydrolases"/>
    <property type="match status" value="1"/>
</dbReference>
<dbReference type="SUPFAM" id="SSF50447">
    <property type="entry name" value="Translation proteins"/>
    <property type="match status" value="1"/>
</dbReference>
<dbReference type="PROSITE" id="PS00301">
    <property type="entry name" value="G_TR_1"/>
    <property type="match status" value="1"/>
</dbReference>
<dbReference type="PROSITE" id="PS51722">
    <property type="entry name" value="G_TR_2"/>
    <property type="match status" value="1"/>
</dbReference>
<name>RF3_SHELP</name>
<organism>
    <name type="scientific">Shewanella loihica (strain ATCC BAA-1088 / PV-4)</name>
    <dbReference type="NCBI Taxonomy" id="323850"/>
    <lineage>
        <taxon>Bacteria</taxon>
        <taxon>Pseudomonadati</taxon>
        <taxon>Pseudomonadota</taxon>
        <taxon>Gammaproteobacteria</taxon>
        <taxon>Alteromonadales</taxon>
        <taxon>Shewanellaceae</taxon>
        <taxon>Shewanella</taxon>
    </lineage>
</organism>
<sequence>MSGYTVEVDKRRTFAIISHPDAGKTTITEKVLLFGQALQKAGTVKGKKSGQHAKSDWMEMEKDRGISITTSVMQFPYREALVNLLDTPGHEDFSEDTYRTLTAVDSCLMVIDSAKGVEQRTIKLMEVTRLRDTPIVTFMNKLDRDIRDPIELMDEVENILNIACAPITWPIGAGKEFKGVYHLLRDEVILYQNGMGHTIQDSRVIKGLDNPELDEAIGSYAQDLRDEMELVLGASHEFDLEAFLKGELTPVFFGTALGNFGVDHILDGIVEWAPRPQPRESDQRNVEPDESKFSGFVFKIQANMDPKHRDRVAFMRVCSGRYEQGMKMHHVRIGKDVNVSDALTFMAGDRNRAEAAYPGDIIGLHNHGTIRIGDTFTQGEKLRFTGVPNFAPEMFRRIRLKDPLKQKQLLKGLVQLSEEGAVQVFRPLDSNDLIVGAVGVLQFEVVVQRLKSEYKVEAIYEAISVATARWVYSKDAKKLEEFKRKCSNNLALDGGDNLTYVAPTMVNLNLSMERYPDIEFAKTREN</sequence>
<gene>
    <name evidence="1" type="primary">prfC</name>
    <name type="ordered locus">Shew_2820</name>
</gene>
<proteinExistence type="inferred from homology"/>
<comment type="function">
    <text evidence="1">Increases the formation of ribosomal termination complexes and stimulates activities of RF-1 and RF-2. It binds guanine nucleotides and has strong preference for UGA stop codons. It may interact directly with the ribosome. The stimulation of RF-1 and RF-2 is significantly reduced by GTP and GDP, but not by GMP.</text>
</comment>
<comment type="subcellular location">
    <subcellularLocation>
        <location evidence="1">Cytoplasm</location>
    </subcellularLocation>
</comment>
<comment type="similarity">
    <text evidence="1">Belongs to the TRAFAC class translation factor GTPase superfamily. Classic translation factor GTPase family. PrfC subfamily.</text>
</comment>
<feature type="chain" id="PRO_1000023676" description="Peptide chain release factor 3">
    <location>
        <begin position="1"/>
        <end position="526"/>
    </location>
</feature>
<feature type="domain" description="tr-type G">
    <location>
        <begin position="9"/>
        <end position="277"/>
    </location>
</feature>
<feature type="binding site" evidence="1">
    <location>
        <begin position="18"/>
        <end position="25"/>
    </location>
    <ligand>
        <name>GTP</name>
        <dbReference type="ChEBI" id="CHEBI:37565"/>
    </ligand>
</feature>
<feature type="binding site" evidence="1">
    <location>
        <begin position="86"/>
        <end position="90"/>
    </location>
    <ligand>
        <name>GTP</name>
        <dbReference type="ChEBI" id="CHEBI:37565"/>
    </ligand>
</feature>
<feature type="binding site" evidence="1">
    <location>
        <begin position="140"/>
        <end position="143"/>
    </location>
    <ligand>
        <name>GTP</name>
        <dbReference type="ChEBI" id="CHEBI:37565"/>
    </ligand>
</feature>